<gene>
    <name type="primary">Ndufb5</name>
</gene>
<dbReference type="EMBL" id="AK018562">
    <property type="protein sequence ID" value="BAB31277.1"/>
    <property type="molecule type" value="mRNA"/>
</dbReference>
<dbReference type="EMBL" id="AK004372">
    <property type="protein sequence ID" value="BAB23279.1"/>
    <property type="molecule type" value="mRNA"/>
</dbReference>
<dbReference type="EMBL" id="AK013223">
    <property type="protein sequence ID" value="BAB28724.1"/>
    <property type="molecule type" value="mRNA"/>
</dbReference>
<dbReference type="EMBL" id="BC025155">
    <property type="protein sequence ID" value="AAH25155.1"/>
    <property type="molecule type" value="mRNA"/>
</dbReference>
<dbReference type="CCDS" id="CCDS17300.1"/>
<dbReference type="RefSeq" id="NP_079592.2">
    <property type="nucleotide sequence ID" value="NM_025316.2"/>
</dbReference>
<dbReference type="PDB" id="6G2J">
    <property type="method" value="EM"/>
    <property type="resolution" value="3.30 A"/>
    <property type="chains" value="h=1-189"/>
</dbReference>
<dbReference type="PDB" id="6G72">
    <property type="method" value="EM"/>
    <property type="resolution" value="3.90 A"/>
    <property type="chains" value="h=1-189"/>
</dbReference>
<dbReference type="PDB" id="6ZR2">
    <property type="method" value="EM"/>
    <property type="resolution" value="3.10 A"/>
    <property type="chains" value="h=1-189"/>
</dbReference>
<dbReference type="PDB" id="6ZTQ">
    <property type="method" value="EM"/>
    <property type="resolution" value="3.00 A"/>
    <property type="chains" value="h=1-189"/>
</dbReference>
<dbReference type="PDB" id="7AK5">
    <property type="method" value="EM"/>
    <property type="resolution" value="3.17 A"/>
    <property type="chains" value="h=1-189"/>
</dbReference>
<dbReference type="PDB" id="7AK6">
    <property type="method" value="EM"/>
    <property type="resolution" value="3.82 A"/>
    <property type="chains" value="h=1-189"/>
</dbReference>
<dbReference type="PDB" id="7B93">
    <property type="method" value="EM"/>
    <property type="resolution" value="3.04 A"/>
    <property type="chains" value="h=1-189"/>
</dbReference>
<dbReference type="PDB" id="7PSA">
    <property type="method" value="EM"/>
    <property type="resolution" value="3.40 A"/>
    <property type="chains" value="h=1-189"/>
</dbReference>
<dbReference type="PDB" id="8C2S">
    <property type="method" value="EM"/>
    <property type="resolution" value="3.90 A"/>
    <property type="chains" value="h=1-189"/>
</dbReference>
<dbReference type="PDB" id="8CA3">
    <property type="method" value="EM"/>
    <property type="resolution" value="3.20 A"/>
    <property type="chains" value="h=1-189"/>
</dbReference>
<dbReference type="PDB" id="8CA5">
    <property type="method" value="EM"/>
    <property type="resolution" value="3.90 A"/>
    <property type="chains" value="h=1-189"/>
</dbReference>
<dbReference type="PDB" id="8IAO">
    <property type="method" value="EM"/>
    <property type="resolution" value="4.20 A"/>
    <property type="chains" value="h=1-189"/>
</dbReference>
<dbReference type="PDB" id="8IAQ">
    <property type="method" value="EM"/>
    <property type="resolution" value="3.40 A"/>
    <property type="chains" value="h=1-189"/>
</dbReference>
<dbReference type="PDB" id="8IB4">
    <property type="method" value="EM"/>
    <property type="resolution" value="4.30 A"/>
    <property type="chains" value="h=1-189"/>
</dbReference>
<dbReference type="PDB" id="8IB6">
    <property type="method" value="EM"/>
    <property type="resolution" value="3.30 A"/>
    <property type="chains" value="h=1-189"/>
</dbReference>
<dbReference type="PDB" id="8IB9">
    <property type="method" value="EM"/>
    <property type="resolution" value="4.30 A"/>
    <property type="chains" value="h=1-189"/>
</dbReference>
<dbReference type="PDB" id="8IBB">
    <property type="method" value="EM"/>
    <property type="resolution" value="3.30 A"/>
    <property type="chains" value="h=1-189"/>
</dbReference>
<dbReference type="PDB" id="8IBD">
    <property type="method" value="EM"/>
    <property type="resolution" value="4.20 A"/>
    <property type="chains" value="h=1-189"/>
</dbReference>
<dbReference type="PDB" id="8IBF">
    <property type="method" value="EM"/>
    <property type="resolution" value="3.30 A"/>
    <property type="chains" value="h=1-189"/>
</dbReference>
<dbReference type="PDB" id="8IC2">
    <property type="method" value="EM"/>
    <property type="resolution" value="6.30 A"/>
    <property type="chains" value="h=1-189"/>
</dbReference>
<dbReference type="PDB" id="8IC4">
    <property type="method" value="EM"/>
    <property type="resolution" value="3.20 A"/>
    <property type="chains" value="h=1-189"/>
</dbReference>
<dbReference type="PDB" id="8OLT">
    <property type="method" value="EM"/>
    <property type="resolution" value="2.84 A"/>
    <property type="chains" value="h=1-189"/>
</dbReference>
<dbReference type="PDB" id="8OM1">
    <property type="method" value="EM"/>
    <property type="resolution" value="2.39 A"/>
    <property type="chains" value="h=1-189"/>
</dbReference>
<dbReference type="PDB" id="8PW5">
    <property type="method" value="EM"/>
    <property type="resolution" value="3.60 A"/>
    <property type="chains" value="h1=1-189"/>
</dbReference>
<dbReference type="PDB" id="8PW6">
    <property type="method" value="EM"/>
    <property type="resolution" value="3.30 A"/>
    <property type="chains" value="h1=1-189"/>
</dbReference>
<dbReference type="PDB" id="8PW7">
    <property type="method" value="EM"/>
    <property type="resolution" value="3.50 A"/>
    <property type="chains" value="h1=1-189"/>
</dbReference>
<dbReference type="PDB" id="8RGP">
    <property type="method" value="EM"/>
    <property type="resolution" value="3.00 A"/>
    <property type="chains" value="h=1-189"/>
</dbReference>
<dbReference type="PDB" id="8RGQ">
    <property type="method" value="EM"/>
    <property type="resolution" value="3.00 A"/>
    <property type="chains" value="h=1-189"/>
</dbReference>
<dbReference type="PDB" id="8RGR">
    <property type="method" value="EM"/>
    <property type="resolution" value="2.90 A"/>
    <property type="chains" value="h=1-189"/>
</dbReference>
<dbReference type="PDB" id="8RGT">
    <property type="method" value="EM"/>
    <property type="resolution" value="3.10 A"/>
    <property type="chains" value="h=1-189"/>
</dbReference>
<dbReference type="PDB" id="8UCA">
    <property type="method" value="EM"/>
    <property type="resolution" value="3.70 A"/>
    <property type="chains" value="B5/b5=1-189"/>
</dbReference>
<dbReference type="PDBsum" id="6G2J"/>
<dbReference type="PDBsum" id="6G72"/>
<dbReference type="PDBsum" id="6ZR2"/>
<dbReference type="PDBsum" id="6ZTQ"/>
<dbReference type="PDBsum" id="7AK5"/>
<dbReference type="PDBsum" id="7AK6"/>
<dbReference type="PDBsum" id="7B93"/>
<dbReference type="PDBsum" id="7PSA"/>
<dbReference type="PDBsum" id="8C2S"/>
<dbReference type="PDBsum" id="8CA3"/>
<dbReference type="PDBsum" id="8CA5"/>
<dbReference type="PDBsum" id="8IAO"/>
<dbReference type="PDBsum" id="8IAQ"/>
<dbReference type="PDBsum" id="8IB4"/>
<dbReference type="PDBsum" id="8IB6"/>
<dbReference type="PDBsum" id="8IB9"/>
<dbReference type="PDBsum" id="8IBB"/>
<dbReference type="PDBsum" id="8IBD"/>
<dbReference type="PDBsum" id="8IBF"/>
<dbReference type="PDBsum" id="8IC2"/>
<dbReference type="PDBsum" id="8IC4"/>
<dbReference type="PDBsum" id="8OLT"/>
<dbReference type="PDBsum" id="8OM1"/>
<dbReference type="PDBsum" id="8PW5"/>
<dbReference type="PDBsum" id="8PW6"/>
<dbReference type="PDBsum" id="8PW7"/>
<dbReference type="PDBsum" id="8RGP"/>
<dbReference type="PDBsum" id="8RGQ"/>
<dbReference type="PDBsum" id="8RGR"/>
<dbReference type="PDBsum" id="8RGT"/>
<dbReference type="PDBsum" id="8UCA"/>
<dbReference type="EMDB" id="EMD-11377"/>
<dbReference type="EMDB" id="EMD-11424"/>
<dbReference type="EMDB" id="EMD-11810"/>
<dbReference type="EMDB" id="EMD-11811"/>
<dbReference type="EMDB" id="EMD-12095"/>
<dbReference type="EMDB" id="EMD-13611"/>
<dbReference type="EMDB" id="EMD-16398"/>
<dbReference type="EMDB" id="EMD-16516"/>
<dbReference type="EMDB" id="EMD-16518"/>
<dbReference type="EMDB" id="EMD-16962"/>
<dbReference type="EMDB" id="EMD-16965"/>
<dbReference type="EMDB" id="EMD-17989"/>
<dbReference type="EMDB" id="EMD-17990"/>
<dbReference type="EMDB" id="EMD-17991"/>
<dbReference type="EMDB" id="EMD-19145"/>
<dbReference type="EMDB" id="EMD-19146"/>
<dbReference type="EMDB" id="EMD-19147"/>
<dbReference type="EMDB" id="EMD-19148"/>
<dbReference type="EMDB" id="EMD-35313"/>
<dbReference type="EMDB" id="EMD-35315"/>
<dbReference type="EMDB" id="EMD-35331"/>
<dbReference type="EMDB" id="EMD-35333"/>
<dbReference type="EMDB" id="EMD-35336"/>
<dbReference type="EMDB" id="EMD-35338"/>
<dbReference type="EMDB" id="EMD-35340"/>
<dbReference type="EMDB" id="EMD-35342"/>
<dbReference type="EMDB" id="EMD-35352"/>
<dbReference type="EMDB" id="EMD-35354"/>
<dbReference type="EMDB" id="EMD-42122"/>
<dbReference type="EMDB" id="EMD-4345"/>
<dbReference type="EMDB" id="EMD-4356"/>
<dbReference type="SMR" id="Q9CQH3"/>
<dbReference type="BioGRID" id="211174">
    <property type="interactions" value="41"/>
</dbReference>
<dbReference type="ComplexPortal" id="CPX-266">
    <property type="entry name" value="Mitochondrial respiratory chain complex I"/>
</dbReference>
<dbReference type="CORUM" id="Q9CQH3"/>
<dbReference type="FunCoup" id="Q9CQH3">
    <property type="interactions" value="2280"/>
</dbReference>
<dbReference type="IntAct" id="Q9CQH3">
    <property type="interactions" value="4"/>
</dbReference>
<dbReference type="STRING" id="10090.ENSMUSP00000114963"/>
<dbReference type="GlyGen" id="Q9CQH3">
    <property type="glycosylation" value="1 site, 1 O-linked glycan (1 site)"/>
</dbReference>
<dbReference type="iPTMnet" id="Q9CQH3"/>
<dbReference type="PhosphoSitePlus" id="Q9CQH3"/>
<dbReference type="jPOST" id="Q9CQH3"/>
<dbReference type="PaxDb" id="10090-ENSMUSP00000114963"/>
<dbReference type="PeptideAtlas" id="Q9CQH3"/>
<dbReference type="ProteomicsDB" id="252867"/>
<dbReference type="Pumba" id="Q9CQH3"/>
<dbReference type="DNASU" id="66046"/>
<dbReference type="Ensembl" id="ENSMUST00000127477.8">
    <property type="protein sequence ID" value="ENSMUSP00000114963.2"/>
    <property type="gene ID" value="ENSMUSG00000027673.13"/>
</dbReference>
<dbReference type="GeneID" id="66046"/>
<dbReference type="KEGG" id="mmu:66046"/>
<dbReference type="UCSC" id="uc008owq.1">
    <property type="organism name" value="mouse"/>
</dbReference>
<dbReference type="AGR" id="MGI:1913296"/>
<dbReference type="CTD" id="4711"/>
<dbReference type="MGI" id="MGI:1913296">
    <property type="gene designation" value="Ndufb5"/>
</dbReference>
<dbReference type="VEuPathDB" id="HostDB:ENSMUSG00000027673"/>
<dbReference type="eggNOG" id="KOG4632">
    <property type="taxonomic scope" value="Eukaryota"/>
</dbReference>
<dbReference type="GeneTree" id="ENSGT00390000009980"/>
<dbReference type="HOGENOM" id="CLU_100260_2_0_1"/>
<dbReference type="InParanoid" id="Q9CQH3"/>
<dbReference type="OMA" id="HHHMTIK"/>
<dbReference type="OrthoDB" id="9995605at2759"/>
<dbReference type="PhylomeDB" id="Q9CQH3"/>
<dbReference type="TreeFam" id="TF313997"/>
<dbReference type="Reactome" id="R-MMU-611105">
    <property type="pathway name" value="Respiratory electron transport"/>
</dbReference>
<dbReference type="Reactome" id="R-MMU-6799198">
    <property type="pathway name" value="Complex I biogenesis"/>
</dbReference>
<dbReference type="BioGRID-ORCS" id="66046">
    <property type="hits" value="18 hits in 79 CRISPR screens"/>
</dbReference>
<dbReference type="ChiTaRS" id="Ndufb5">
    <property type="organism name" value="mouse"/>
</dbReference>
<dbReference type="PRO" id="PR:Q9CQH3"/>
<dbReference type="Proteomes" id="UP000000589">
    <property type="component" value="Chromosome 3"/>
</dbReference>
<dbReference type="RNAct" id="Q9CQH3">
    <property type="molecule type" value="protein"/>
</dbReference>
<dbReference type="Bgee" id="ENSMUSG00000027673">
    <property type="expression patterns" value="Expressed in plantaris and 261 other cell types or tissues"/>
</dbReference>
<dbReference type="ExpressionAtlas" id="Q9CQH3">
    <property type="expression patterns" value="baseline and differential"/>
</dbReference>
<dbReference type="GO" id="GO:0005743">
    <property type="term" value="C:mitochondrial inner membrane"/>
    <property type="evidence" value="ECO:0000314"/>
    <property type="project" value="UniProtKB"/>
</dbReference>
<dbReference type="GO" id="GO:0005739">
    <property type="term" value="C:mitochondrion"/>
    <property type="evidence" value="ECO:0007005"/>
    <property type="project" value="MGI"/>
</dbReference>
<dbReference type="GO" id="GO:0005654">
    <property type="term" value="C:nucleoplasm"/>
    <property type="evidence" value="ECO:0007669"/>
    <property type="project" value="Ensembl"/>
</dbReference>
<dbReference type="GO" id="GO:0045271">
    <property type="term" value="C:respiratory chain complex I"/>
    <property type="evidence" value="ECO:0000314"/>
    <property type="project" value="UniProtKB"/>
</dbReference>
<dbReference type="GO" id="GO:0009060">
    <property type="term" value="P:aerobic respiration"/>
    <property type="evidence" value="ECO:0000303"/>
    <property type="project" value="ComplexPortal"/>
</dbReference>
<dbReference type="GO" id="GO:0042776">
    <property type="term" value="P:proton motive force-driven mitochondrial ATP synthesis"/>
    <property type="evidence" value="ECO:0000303"/>
    <property type="project" value="ComplexPortal"/>
</dbReference>
<dbReference type="InterPro" id="IPR019173">
    <property type="entry name" value="NADH_UbQ_OxRdtase_B5_su"/>
</dbReference>
<dbReference type="PANTHER" id="PTHR13178:SF0">
    <property type="entry name" value="NADH DEHYDROGENASE [UBIQUINONE] 1 BETA SUBCOMPLEX SUBUNIT 5, MITOCHONDRIAL"/>
    <property type="match status" value="1"/>
</dbReference>
<dbReference type="PANTHER" id="PTHR13178">
    <property type="entry name" value="NADH-UBIQUINONE OXIDOREDUCTASE SGDH SUBUNIT"/>
    <property type="match status" value="1"/>
</dbReference>
<dbReference type="Pfam" id="PF09781">
    <property type="entry name" value="NDUF_B5"/>
    <property type="match status" value="1"/>
</dbReference>
<keyword id="KW-0002">3D-structure</keyword>
<keyword id="KW-0903">Direct protein sequencing</keyword>
<keyword id="KW-0249">Electron transport</keyword>
<keyword id="KW-0472">Membrane</keyword>
<keyword id="KW-0496">Mitochondrion</keyword>
<keyword id="KW-0999">Mitochondrion inner membrane</keyword>
<keyword id="KW-1185">Reference proteome</keyword>
<keyword id="KW-0679">Respiratory chain</keyword>
<keyword id="KW-0809">Transit peptide</keyword>
<keyword id="KW-0812">Transmembrane</keyword>
<keyword id="KW-1133">Transmembrane helix</keyword>
<keyword id="KW-0813">Transport</keyword>
<protein>
    <recommendedName>
        <fullName>NADH dehydrogenase [ubiquinone] 1 beta subcomplex subunit 5, mitochondrial</fullName>
    </recommendedName>
    <alternativeName>
        <fullName>Complex I-SGDH</fullName>
        <shortName>CI-SGDH</shortName>
    </alternativeName>
    <alternativeName>
        <fullName>NADH-ubiquinone oxidoreductase SGDH subunit</fullName>
    </alternativeName>
</protein>
<proteinExistence type="evidence at protein level"/>
<sequence length="189" mass="21710">MAAMSLLQRASVSALTALSCRRAGPRLGVGSFLTRSFPKTVAPVRHSGDHGKRLFVVKPSLYYDARFLRLMKFYLMLTGIPVIIGITLVNIFIGEAELAEIPEGYIPEHWEYYKHPISRWIARNFYDGPEKNYEKTLAILQIESEKAELRLKEQEVRRLMRARGDGPWYQFPTPEKEFIDHSPKATPDN</sequence>
<accession>Q9CQH3</accession>
<feature type="transit peptide" description="Mitochondrion" evidence="1">
    <location>
        <begin position="1"/>
        <end position="46"/>
    </location>
</feature>
<feature type="chain" id="PRO_0000020053" description="NADH dehydrogenase [ubiquinone] 1 beta subcomplex subunit 5, mitochondrial">
    <location>
        <begin position="47"/>
        <end position="189"/>
    </location>
</feature>
<feature type="transmembrane region" description="Helical" evidence="3">
    <location>
        <begin position="73"/>
        <end position="93"/>
    </location>
</feature>
<feature type="helix" evidence="7">
    <location>
        <begin position="62"/>
        <end position="92"/>
    </location>
</feature>
<feature type="strand" evidence="8">
    <location>
        <begin position="97"/>
        <end position="99"/>
    </location>
</feature>
<feature type="helix" evidence="7">
    <location>
        <begin position="109"/>
        <end position="112"/>
    </location>
</feature>
<feature type="helix" evidence="7">
    <location>
        <begin position="116"/>
        <end position="125"/>
    </location>
</feature>
<feature type="helix" evidence="7">
    <location>
        <begin position="129"/>
        <end position="163"/>
    </location>
</feature>
<feature type="strand" evidence="7">
    <location>
        <begin position="166"/>
        <end position="169"/>
    </location>
</feature>
<feature type="helix" evidence="7">
    <location>
        <begin position="176"/>
        <end position="178"/>
    </location>
</feature>
<feature type="strand" evidence="7">
    <location>
        <begin position="185"/>
        <end position="187"/>
    </location>
</feature>
<organism>
    <name type="scientific">Mus musculus</name>
    <name type="common">Mouse</name>
    <dbReference type="NCBI Taxonomy" id="10090"/>
    <lineage>
        <taxon>Eukaryota</taxon>
        <taxon>Metazoa</taxon>
        <taxon>Chordata</taxon>
        <taxon>Craniata</taxon>
        <taxon>Vertebrata</taxon>
        <taxon>Euteleostomi</taxon>
        <taxon>Mammalia</taxon>
        <taxon>Eutheria</taxon>
        <taxon>Euarchontoglires</taxon>
        <taxon>Glires</taxon>
        <taxon>Rodentia</taxon>
        <taxon>Myomorpha</taxon>
        <taxon>Muroidea</taxon>
        <taxon>Muridae</taxon>
        <taxon>Murinae</taxon>
        <taxon>Mus</taxon>
        <taxon>Mus</taxon>
    </lineage>
</organism>
<comment type="function">
    <text evidence="4">Accessory subunit of the mitochondrial membrane respiratory chain NADH dehydrogenase (Complex I), that is believed not to be involved in catalysis. Complex I functions in the transfer of electrons from NADH to the respiratory chain. The immediate electron acceptor for the enzyme is believed to be ubiquinone.</text>
</comment>
<comment type="subunit">
    <text evidence="4">Complex I is composed of 45 different subunits.</text>
</comment>
<comment type="subcellular location">
    <subcellularLocation>
        <location evidence="4">Mitochondrion inner membrane</location>
        <topology evidence="2">Single-pass membrane protein</topology>
        <orientation evidence="2">Matrix side</orientation>
    </subcellularLocation>
</comment>
<comment type="similarity">
    <text evidence="5">Belongs to the complex I NDUFB5 subunit family.</text>
</comment>
<evidence type="ECO:0000250" key="1"/>
<evidence type="ECO:0000250" key="2">
    <source>
        <dbReference type="UniProtKB" id="O43674"/>
    </source>
</evidence>
<evidence type="ECO:0000255" key="3"/>
<evidence type="ECO:0000269" key="4">
    <source>
    </source>
</evidence>
<evidence type="ECO:0000305" key="5"/>
<evidence type="ECO:0007744" key="6">
    <source>
        <dbReference type="PDB" id="8PW5"/>
    </source>
</evidence>
<evidence type="ECO:0007829" key="7">
    <source>
        <dbReference type="PDB" id="8OM1"/>
    </source>
</evidence>
<evidence type="ECO:0007829" key="8">
    <source>
        <dbReference type="PDB" id="8RGT"/>
    </source>
</evidence>
<reference key="1">
    <citation type="journal article" date="2005" name="Science">
        <title>The transcriptional landscape of the mammalian genome.</title>
        <authorList>
            <person name="Carninci P."/>
            <person name="Kasukawa T."/>
            <person name="Katayama S."/>
            <person name="Gough J."/>
            <person name="Frith M.C."/>
            <person name="Maeda N."/>
            <person name="Oyama R."/>
            <person name="Ravasi T."/>
            <person name="Lenhard B."/>
            <person name="Wells C."/>
            <person name="Kodzius R."/>
            <person name="Shimokawa K."/>
            <person name="Bajic V.B."/>
            <person name="Brenner S.E."/>
            <person name="Batalov S."/>
            <person name="Forrest A.R."/>
            <person name="Zavolan M."/>
            <person name="Davis M.J."/>
            <person name="Wilming L.G."/>
            <person name="Aidinis V."/>
            <person name="Allen J.E."/>
            <person name="Ambesi-Impiombato A."/>
            <person name="Apweiler R."/>
            <person name="Aturaliya R.N."/>
            <person name="Bailey T.L."/>
            <person name="Bansal M."/>
            <person name="Baxter L."/>
            <person name="Beisel K.W."/>
            <person name="Bersano T."/>
            <person name="Bono H."/>
            <person name="Chalk A.M."/>
            <person name="Chiu K.P."/>
            <person name="Choudhary V."/>
            <person name="Christoffels A."/>
            <person name="Clutterbuck D.R."/>
            <person name="Crowe M.L."/>
            <person name="Dalla E."/>
            <person name="Dalrymple B.P."/>
            <person name="de Bono B."/>
            <person name="Della Gatta G."/>
            <person name="di Bernardo D."/>
            <person name="Down T."/>
            <person name="Engstrom P."/>
            <person name="Fagiolini M."/>
            <person name="Faulkner G."/>
            <person name="Fletcher C.F."/>
            <person name="Fukushima T."/>
            <person name="Furuno M."/>
            <person name="Futaki S."/>
            <person name="Gariboldi M."/>
            <person name="Georgii-Hemming P."/>
            <person name="Gingeras T.R."/>
            <person name="Gojobori T."/>
            <person name="Green R.E."/>
            <person name="Gustincich S."/>
            <person name="Harbers M."/>
            <person name="Hayashi Y."/>
            <person name="Hensch T.K."/>
            <person name="Hirokawa N."/>
            <person name="Hill D."/>
            <person name="Huminiecki L."/>
            <person name="Iacono M."/>
            <person name="Ikeo K."/>
            <person name="Iwama A."/>
            <person name="Ishikawa T."/>
            <person name="Jakt M."/>
            <person name="Kanapin A."/>
            <person name="Katoh M."/>
            <person name="Kawasawa Y."/>
            <person name="Kelso J."/>
            <person name="Kitamura H."/>
            <person name="Kitano H."/>
            <person name="Kollias G."/>
            <person name="Krishnan S.P."/>
            <person name="Kruger A."/>
            <person name="Kummerfeld S.K."/>
            <person name="Kurochkin I.V."/>
            <person name="Lareau L.F."/>
            <person name="Lazarevic D."/>
            <person name="Lipovich L."/>
            <person name="Liu J."/>
            <person name="Liuni S."/>
            <person name="McWilliam S."/>
            <person name="Madan Babu M."/>
            <person name="Madera M."/>
            <person name="Marchionni L."/>
            <person name="Matsuda H."/>
            <person name="Matsuzawa S."/>
            <person name="Miki H."/>
            <person name="Mignone F."/>
            <person name="Miyake S."/>
            <person name="Morris K."/>
            <person name="Mottagui-Tabar S."/>
            <person name="Mulder N."/>
            <person name="Nakano N."/>
            <person name="Nakauchi H."/>
            <person name="Ng P."/>
            <person name="Nilsson R."/>
            <person name="Nishiguchi S."/>
            <person name="Nishikawa S."/>
            <person name="Nori F."/>
            <person name="Ohara O."/>
            <person name="Okazaki Y."/>
            <person name="Orlando V."/>
            <person name="Pang K.C."/>
            <person name="Pavan W.J."/>
            <person name="Pavesi G."/>
            <person name="Pesole G."/>
            <person name="Petrovsky N."/>
            <person name="Piazza S."/>
            <person name="Reed J."/>
            <person name="Reid J.F."/>
            <person name="Ring B.Z."/>
            <person name="Ringwald M."/>
            <person name="Rost B."/>
            <person name="Ruan Y."/>
            <person name="Salzberg S.L."/>
            <person name="Sandelin A."/>
            <person name="Schneider C."/>
            <person name="Schoenbach C."/>
            <person name="Sekiguchi K."/>
            <person name="Semple C.A."/>
            <person name="Seno S."/>
            <person name="Sessa L."/>
            <person name="Sheng Y."/>
            <person name="Shibata Y."/>
            <person name="Shimada H."/>
            <person name="Shimada K."/>
            <person name="Silva D."/>
            <person name="Sinclair B."/>
            <person name="Sperling S."/>
            <person name="Stupka E."/>
            <person name="Sugiura K."/>
            <person name="Sultana R."/>
            <person name="Takenaka Y."/>
            <person name="Taki K."/>
            <person name="Tammoja K."/>
            <person name="Tan S.L."/>
            <person name="Tang S."/>
            <person name="Taylor M.S."/>
            <person name="Tegner J."/>
            <person name="Teichmann S.A."/>
            <person name="Ueda H.R."/>
            <person name="van Nimwegen E."/>
            <person name="Verardo R."/>
            <person name="Wei C.L."/>
            <person name="Yagi K."/>
            <person name="Yamanishi H."/>
            <person name="Zabarovsky E."/>
            <person name="Zhu S."/>
            <person name="Zimmer A."/>
            <person name="Hide W."/>
            <person name="Bult C."/>
            <person name="Grimmond S.M."/>
            <person name="Teasdale R.D."/>
            <person name="Liu E.T."/>
            <person name="Brusic V."/>
            <person name="Quackenbush J."/>
            <person name="Wahlestedt C."/>
            <person name="Mattick J.S."/>
            <person name="Hume D.A."/>
            <person name="Kai C."/>
            <person name="Sasaki D."/>
            <person name="Tomaru Y."/>
            <person name="Fukuda S."/>
            <person name="Kanamori-Katayama M."/>
            <person name="Suzuki M."/>
            <person name="Aoki J."/>
            <person name="Arakawa T."/>
            <person name="Iida J."/>
            <person name="Imamura K."/>
            <person name="Itoh M."/>
            <person name="Kato T."/>
            <person name="Kawaji H."/>
            <person name="Kawagashira N."/>
            <person name="Kawashima T."/>
            <person name="Kojima M."/>
            <person name="Kondo S."/>
            <person name="Konno H."/>
            <person name="Nakano K."/>
            <person name="Ninomiya N."/>
            <person name="Nishio T."/>
            <person name="Okada M."/>
            <person name="Plessy C."/>
            <person name="Shibata K."/>
            <person name="Shiraki T."/>
            <person name="Suzuki S."/>
            <person name="Tagami M."/>
            <person name="Waki K."/>
            <person name="Watahiki A."/>
            <person name="Okamura-Oho Y."/>
            <person name="Suzuki H."/>
            <person name="Kawai J."/>
            <person name="Hayashizaki Y."/>
        </authorList>
    </citation>
    <scope>NUCLEOTIDE SEQUENCE [LARGE SCALE MRNA]</scope>
    <source>
        <strain>C57BL/6J</strain>
        <tissue>Colon</tissue>
        <tissue>Embryo</tissue>
    </source>
</reference>
<reference key="2">
    <citation type="journal article" date="2004" name="Genome Res.">
        <title>The status, quality, and expansion of the NIH full-length cDNA project: the Mammalian Gene Collection (MGC).</title>
        <authorList>
            <consortium name="The MGC Project Team"/>
        </authorList>
    </citation>
    <scope>NUCLEOTIDE SEQUENCE [LARGE SCALE MRNA]</scope>
</reference>
<reference key="3">
    <citation type="submission" date="2007-04" db="UniProtKB">
        <authorList>
            <person name="Lubec G."/>
            <person name="Kang S.U."/>
        </authorList>
    </citation>
    <scope>PROTEIN SEQUENCE OF 54-66; 124-131; 136-150 AND 161-176</scope>
    <scope>IDENTIFICATION BY MASS SPECTROMETRY</scope>
    <source>
        <strain>C57BL/6J</strain>
        <tissue>Brain</tissue>
    </source>
</reference>
<reference key="4">
    <citation type="journal article" date="2010" name="Cell">
        <title>A tissue-specific atlas of mouse protein phosphorylation and expression.</title>
        <authorList>
            <person name="Huttlin E.L."/>
            <person name="Jedrychowski M.P."/>
            <person name="Elias J.E."/>
            <person name="Goswami T."/>
            <person name="Rad R."/>
            <person name="Beausoleil S.A."/>
            <person name="Villen J."/>
            <person name="Haas W."/>
            <person name="Sowa M.E."/>
            <person name="Gygi S.P."/>
        </authorList>
    </citation>
    <scope>IDENTIFICATION BY MASS SPECTROMETRY [LARGE SCALE ANALYSIS]</scope>
    <source>
        <tissue>Brain</tissue>
        <tissue>Brown adipose tissue</tissue>
        <tissue>Heart</tissue>
        <tissue>Kidney</tissue>
        <tissue>Liver</tissue>
        <tissue>Lung</tissue>
        <tissue>Pancreas</tissue>
        <tissue>Spleen</tissue>
        <tissue>Testis</tissue>
    </source>
</reference>
<reference evidence="6" key="5">
    <citation type="journal article" date="2024" name="Nat. Struct. Mol. Biol.">
        <title>SCAF1 drives the compositional diversity of mammalian respirasomes.</title>
        <authorList>
            <person name="Vercellino I."/>
            <person name="Sazanov L.A."/>
        </authorList>
    </citation>
    <scope>STRUCTURE BY ELECTRON MICROSCOPY (3.60 ANGSTROMS) IN COMPLEX WITH MITOCHONDRIAL RESPIRATORY SUPERCOMPLEX</scope>
    <scope>FUNCTION</scope>
    <scope>SUBCELLULAR LOCATION</scope>
    <scope>SUBUNIT</scope>
</reference>
<name>NDUB5_MOUSE</name>